<dbReference type="EMBL" id="BA000018">
    <property type="protein sequence ID" value="BAB43117.1"/>
    <property type="molecule type" value="Genomic_DNA"/>
</dbReference>
<dbReference type="RefSeq" id="WP_000917289.1">
    <property type="nucleotide sequence ID" value="NC_002745.2"/>
</dbReference>
<dbReference type="SMR" id="P99104"/>
<dbReference type="EnsemblBacteria" id="BAB43117">
    <property type="protein sequence ID" value="BAB43117"/>
    <property type="gene ID" value="BAB43117"/>
</dbReference>
<dbReference type="GeneID" id="98346332"/>
<dbReference type="KEGG" id="sau:SA1837"/>
<dbReference type="HOGENOM" id="CLU_132825_2_1_9"/>
<dbReference type="GO" id="GO:0005737">
    <property type="term" value="C:cytoplasm"/>
    <property type="evidence" value="ECO:0007669"/>
    <property type="project" value="UniProtKB-SubCell"/>
</dbReference>
<dbReference type="GO" id="GO:0005524">
    <property type="term" value="F:ATP binding"/>
    <property type="evidence" value="ECO:0007669"/>
    <property type="project" value="InterPro"/>
</dbReference>
<dbReference type="GO" id="GO:0046872">
    <property type="term" value="F:metal ion binding"/>
    <property type="evidence" value="ECO:0007669"/>
    <property type="project" value="TreeGrafter"/>
</dbReference>
<dbReference type="GO" id="GO:0044183">
    <property type="term" value="F:protein folding chaperone"/>
    <property type="evidence" value="ECO:0007669"/>
    <property type="project" value="InterPro"/>
</dbReference>
<dbReference type="GO" id="GO:0051087">
    <property type="term" value="F:protein-folding chaperone binding"/>
    <property type="evidence" value="ECO:0007669"/>
    <property type="project" value="TreeGrafter"/>
</dbReference>
<dbReference type="GO" id="GO:0051082">
    <property type="term" value="F:unfolded protein binding"/>
    <property type="evidence" value="ECO:0007669"/>
    <property type="project" value="TreeGrafter"/>
</dbReference>
<dbReference type="GO" id="GO:0051085">
    <property type="term" value="P:chaperone cofactor-dependent protein refolding"/>
    <property type="evidence" value="ECO:0007669"/>
    <property type="project" value="TreeGrafter"/>
</dbReference>
<dbReference type="CDD" id="cd00320">
    <property type="entry name" value="cpn10"/>
    <property type="match status" value="1"/>
</dbReference>
<dbReference type="FunFam" id="2.30.33.40:FF:000001">
    <property type="entry name" value="10 kDa chaperonin"/>
    <property type="match status" value="1"/>
</dbReference>
<dbReference type="Gene3D" id="2.30.33.40">
    <property type="entry name" value="GroES chaperonin"/>
    <property type="match status" value="1"/>
</dbReference>
<dbReference type="HAMAP" id="MF_00580">
    <property type="entry name" value="CH10"/>
    <property type="match status" value="1"/>
</dbReference>
<dbReference type="InterPro" id="IPR020818">
    <property type="entry name" value="Chaperonin_GroES"/>
</dbReference>
<dbReference type="InterPro" id="IPR037124">
    <property type="entry name" value="Chaperonin_GroES_sf"/>
</dbReference>
<dbReference type="InterPro" id="IPR018369">
    <property type="entry name" value="Chaprnonin_Cpn10_CS"/>
</dbReference>
<dbReference type="InterPro" id="IPR011032">
    <property type="entry name" value="GroES-like_sf"/>
</dbReference>
<dbReference type="NCBIfam" id="NF001531">
    <property type="entry name" value="PRK00364.2-2"/>
    <property type="match status" value="1"/>
</dbReference>
<dbReference type="NCBIfam" id="NF001532">
    <property type="entry name" value="PRK00364.2-3"/>
    <property type="match status" value="1"/>
</dbReference>
<dbReference type="NCBIfam" id="NF001533">
    <property type="entry name" value="PRK00364.2-4"/>
    <property type="match status" value="1"/>
</dbReference>
<dbReference type="NCBIfam" id="NF001534">
    <property type="entry name" value="PRK00364.2-5"/>
    <property type="match status" value="1"/>
</dbReference>
<dbReference type="PANTHER" id="PTHR10772">
    <property type="entry name" value="10 KDA HEAT SHOCK PROTEIN"/>
    <property type="match status" value="1"/>
</dbReference>
<dbReference type="PANTHER" id="PTHR10772:SF58">
    <property type="entry name" value="CO-CHAPERONIN GROES"/>
    <property type="match status" value="1"/>
</dbReference>
<dbReference type="Pfam" id="PF00166">
    <property type="entry name" value="Cpn10"/>
    <property type="match status" value="1"/>
</dbReference>
<dbReference type="PRINTS" id="PR00297">
    <property type="entry name" value="CHAPERONIN10"/>
</dbReference>
<dbReference type="SMART" id="SM00883">
    <property type="entry name" value="Cpn10"/>
    <property type="match status" value="1"/>
</dbReference>
<dbReference type="SUPFAM" id="SSF50129">
    <property type="entry name" value="GroES-like"/>
    <property type="match status" value="1"/>
</dbReference>
<dbReference type="PROSITE" id="PS00681">
    <property type="entry name" value="CHAPERONINS_CPN10"/>
    <property type="match status" value="1"/>
</dbReference>
<organism>
    <name type="scientific">Staphylococcus aureus (strain N315)</name>
    <dbReference type="NCBI Taxonomy" id="158879"/>
    <lineage>
        <taxon>Bacteria</taxon>
        <taxon>Bacillati</taxon>
        <taxon>Bacillota</taxon>
        <taxon>Bacilli</taxon>
        <taxon>Bacillales</taxon>
        <taxon>Staphylococcaceae</taxon>
        <taxon>Staphylococcus</taxon>
    </lineage>
</organism>
<proteinExistence type="evidence at protein level"/>
<reference key="1">
    <citation type="journal article" date="2001" name="Lancet">
        <title>Whole genome sequencing of meticillin-resistant Staphylococcus aureus.</title>
        <authorList>
            <person name="Kuroda M."/>
            <person name="Ohta T."/>
            <person name="Uchiyama I."/>
            <person name="Baba T."/>
            <person name="Yuzawa H."/>
            <person name="Kobayashi I."/>
            <person name="Cui L."/>
            <person name="Oguchi A."/>
            <person name="Aoki K."/>
            <person name="Nagai Y."/>
            <person name="Lian J.-Q."/>
            <person name="Ito T."/>
            <person name="Kanamori M."/>
            <person name="Matsumaru H."/>
            <person name="Maruyama A."/>
            <person name="Murakami H."/>
            <person name="Hosoyama A."/>
            <person name="Mizutani-Ui Y."/>
            <person name="Takahashi N.K."/>
            <person name="Sawano T."/>
            <person name="Inoue R."/>
            <person name="Kaito C."/>
            <person name="Sekimizu K."/>
            <person name="Hirakawa H."/>
            <person name="Kuhara S."/>
            <person name="Goto S."/>
            <person name="Yabuzaki J."/>
            <person name="Kanehisa M."/>
            <person name="Yamashita A."/>
            <person name="Oshima K."/>
            <person name="Furuya K."/>
            <person name="Yoshino C."/>
            <person name="Shiba T."/>
            <person name="Hattori M."/>
            <person name="Ogasawara N."/>
            <person name="Hayashi H."/>
            <person name="Hiramatsu K."/>
        </authorList>
    </citation>
    <scope>NUCLEOTIDE SEQUENCE [LARGE SCALE GENOMIC DNA]</scope>
    <source>
        <strain>N315</strain>
    </source>
</reference>
<reference key="2">
    <citation type="journal article" date="2005" name="J. Microbiol. Methods">
        <title>Correlation of proteomic and transcriptomic profiles of Staphylococcus aureus during the post-exponential phase of growth.</title>
        <authorList>
            <person name="Scherl A."/>
            <person name="Francois P."/>
            <person name="Bento M."/>
            <person name="Deshusses J.M."/>
            <person name="Charbonnier Y."/>
            <person name="Converset V."/>
            <person name="Huyghe A."/>
            <person name="Walter N."/>
            <person name="Hoogland C."/>
            <person name="Appel R.D."/>
            <person name="Sanchez J.-C."/>
            <person name="Zimmermann-Ivol C.G."/>
            <person name="Corthals G.L."/>
            <person name="Hochstrasser D.F."/>
            <person name="Schrenzel J."/>
        </authorList>
    </citation>
    <scope>IDENTIFICATION BY MASS SPECTROMETRY</scope>
    <source>
        <strain>N315</strain>
    </source>
</reference>
<reference key="3">
    <citation type="submission" date="2007-10" db="UniProtKB">
        <title>Shotgun proteomic analysis of total and membrane protein extracts of S. aureus strain N315.</title>
        <authorList>
            <person name="Vaezzadeh A.R."/>
            <person name="Deshusses J."/>
            <person name="Lescuyer P."/>
            <person name="Hochstrasser D.F."/>
        </authorList>
    </citation>
    <scope>IDENTIFICATION BY MASS SPECTROMETRY [LARGE SCALE ANALYSIS]</scope>
    <source>
        <strain>N315</strain>
    </source>
</reference>
<name>CH10_STAAN</name>
<accession>P99104</accession>
<accession>Q08841</accession>
<evidence type="ECO:0000255" key="1">
    <source>
        <dbReference type="HAMAP-Rule" id="MF_00580"/>
    </source>
</evidence>
<evidence type="ECO:0000305" key="2"/>
<keyword id="KW-0143">Chaperone</keyword>
<keyword id="KW-0963">Cytoplasm</keyword>
<keyword id="KW-0346">Stress response</keyword>
<comment type="function">
    <text evidence="1">Together with the chaperonin GroEL, plays an essential role in assisting protein folding. The GroEL-GroES system forms a nano-cage that allows encapsulation of the non-native substrate proteins and provides a physical environment optimized to promote and accelerate protein folding. GroES binds to the apical surface of the GroEL ring, thereby capping the opening of the GroEL channel.</text>
</comment>
<comment type="subunit">
    <text evidence="1">Heptamer of 7 subunits arranged in a ring. Interacts with the chaperonin GroEL.</text>
</comment>
<comment type="subcellular location">
    <subcellularLocation>
        <location evidence="1">Cytoplasm</location>
    </subcellularLocation>
</comment>
<comment type="similarity">
    <text evidence="1 2">Belongs to the GroES chaperonin family.</text>
</comment>
<gene>
    <name evidence="1" type="primary">groES</name>
    <name evidence="1" type="synonym">groS</name>
    <name type="synonym">hsp10</name>
    <name type="ordered locus">SA1837</name>
</gene>
<protein>
    <recommendedName>
        <fullName evidence="1">Co-chaperonin GroES</fullName>
    </recommendedName>
    <alternativeName>
        <fullName evidence="1">10 kDa chaperonin</fullName>
    </alternativeName>
    <alternativeName>
        <fullName evidence="1">Chaperonin-10</fullName>
        <shortName evidence="1">Cpn10</shortName>
    </alternativeName>
    <alternativeName>
        <fullName>Heat shock protein 10</fullName>
    </alternativeName>
</protein>
<sequence length="94" mass="10416">MLKPIGNRVIIEKKEQEQTTKSGIVLTDSAKEKSNEGVIVAVGTGRLLNDGTRVTPEVKEGDRVVFQQYAGTEVKRDNETYLVLNEEDILAVIE</sequence>
<feature type="chain" id="PRO_0000174841" description="Co-chaperonin GroES">
    <location>
        <begin position="1"/>
        <end position="94"/>
    </location>
</feature>